<evidence type="ECO:0000255" key="1">
    <source>
        <dbReference type="HAMAP-Rule" id="MF_01430"/>
    </source>
</evidence>
<evidence type="ECO:0000255" key="2">
    <source>
        <dbReference type="PROSITE-ProRule" id="PRU01115"/>
    </source>
</evidence>
<keyword id="KW-0998">Cell outer membrane</keyword>
<keyword id="KW-0472">Membrane</keyword>
<keyword id="KW-1185">Reference proteome</keyword>
<keyword id="KW-0677">Repeat</keyword>
<keyword id="KW-0732">Signal</keyword>
<keyword id="KW-0812">Transmembrane</keyword>
<keyword id="KW-1134">Transmembrane beta strand</keyword>
<reference key="1">
    <citation type="journal article" date="2008" name="J. Bacteriol.">
        <title>The pangenome structure of Escherichia coli: comparative genomic analysis of E. coli commensal and pathogenic isolates.</title>
        <authorList>
            <person name="Rasko D.A."/>
            <person name="Rosovitz M.J."/>
            <person name="Myers G.S.A."/>
            <person name="Mongodin E.F."/>
            <person name="Fricke W.F."/>
            <person name="Gajer P."/>
            <person name="Crabtree J."/>
            <person name="Sebaihia M."/>
            <person name="Thomson N.R."/>
            <person name="Chaudhuri R."/>
            <person name="Henderson I.R."/>
            <person name="Sperandio V."/>
            <person name="Ravel J."/>
        </authorList>
    </citation>
    <scope>NUCLEOTIDE SEQUENCE [LARGE SCALE GENOMIC DNA]</scope>
    <source>
        <strain>E24377A / ETEC</strain>
    </source>
</reference>
<dbReference type="EMBL" id="CP000800">
    <property type="protein sequence ID" value="ABV17301.1"/>
    <property type="molecule type" value="Genomic_DNA"/>
</dbReference>
<dbReference type="RefSeq" id="WP_001240896.1">
    <property type="nucleotide sequence ID" value="NC_009801.1"/>
</dbReference>
<dbReference type="BMRB" id="A7ZHR7"/>
<dbReference type="SMR" id="A7ZHR7"/>
<dbReference type="GeneID" id="93777248"/>
<dbReference type="KEGG" id="ecw:EcE24377A_0181"/>
<dbReference type="HOGENOM" id="CLU_007664_1_0_6"/>
<dbReference type="Proteomes" id="UP000001122">
    <property type="component" value="Chromosome"/>
</dbReference>
<dbReference type="GO" id="GO:1990063">
    <property type="term" value="C:Bam protein complex"/>
    <property type="evidence" value="ECO:0007669"/>
    <property type="project" value="TreeGrafter"/>
</dbReference>
<dbReference type="GO" id="GO:0043165">
    <property type="term" value="P:Gram-negative-bacterium-type cell outer membrane assembly"/>
    <property type="evidence" value="ECO:0007669"/>
    <property type="project" value="UniProtKB-UniRule"/>
</dbReference>
<dbReference type="GO" id="GO:0051205">
    <property type="term" value="P:protein insertion into membrane"/>
    <property type="evidence" value="ECO:0007669"/>
    <property type="project" value="UniProtKB-UniRule"/>
</dbReference>
<dbReference type="FunFam" id="2.40.160.50:FF:000001">
    <property type="entry name" value="Outer membrane protein assembly factor BamA"/>
    <property type="match status" value="1"/>
</dbReference>
<dbReference type="FunFam" id="3.10.20.310:FF:000001">
    <property type="entry name" value="Outer membrane protein assembly factor BamA"/>
    <property type="match status" value="1"/>
</dbReference>
<dbReference type="FunFam" id="3.10.20.310:FF:000002">
    <property type="entry name" value="Outer membrane protein assembly factor BamA"/>
    <property type="match status" value="1"/>
</dbReference>
<dbReference type="FunFam" id="3.10.20.310:FF:000003">
    <property type="entry name" value="Outer membrane protein assembly factor BamA"/>
    <property type="match status" value="1"/>
</dbReference>
<dbReference type="FunFam" id="3.10.20.310:FF:000004">
    <property type="entry name" value="Outer membrane protein assembly factor BamA"/>
    <property type="match status" value="1"/>
</dbReference>
<dbReference type="FunFam" id="3.10.20.310:FF:000005">
    <property type="entry name" value="Outer membrane protein assembly factor BamA"/>
    <property type="match status" value="1"/>
</dbReference>
<dbReference type="Gene3D" id="3.10.20.310">
    <property type="entry name" value="membrane protein fhac"/>
    <property type="match status" value="5"/>
</dbReference>
<dbReference type="Gene3D" id="2.40.160.50">
    <property type="entry name" value="membrane protein fhac: a member of the omp85/tpsb transporter family"/>
    <property type="match status" value="1"/>
</dbReference>
<dbReference type="HAMAP" id="MF_01430">
    <property type="entry name" value="OM_assembly_BamA"/>
    <property type="match status" value="1"/>
</dbReference>
<dbReference type="InterPro" id="IPR000184">
    <property type="entry name" value="Bac_surfAg_D15"/>
</dbReference>
<dbReference type="InterPro" id="IPR010827">
    <property type="entry name" value="BamA/TamA_POTRA"/>
</dbReference>
<dbReference type="InterPro" id="IPR039910">
    <property type="entry name" value="D15-like"/>
</dbReference>
<dbReference type="InterPro" id="IPR023707">
    <property type="entry name" value="OM_assembly_BamA"/>
</dbReference>
<dbReference type="InterPro" id="IPR034746">
    <property type="entry name" value="POTRA"/>
</dbReference>
<dbReference type="NCBIfam" id="TIGR03303">
    <property type="entry name" value="OM_YaeT"/>
    <property type="match status" value="1"/>
</dbReference>
<dbReference type="NCBIfam" id="NF008287">
    <property type="entry name" value="PRK11067.1"/>
    <property type="match status" value="1"/>
</dbReference>
<dbReference type="PANTHER" id="PTHR12815:SF23">
    <property type="entry name" value="OUTER MEMBRANE PROTEIN ASSEMBLY FACTOR BAMA"/>
    <property type="match status" value="1"/>
</dbReference>
<dbReference type="PANTHER" id="PTHR12815">
    <property type="entry name" value="SORTING AND ASSEMBLY MACHINERY SAMM50 PROTEIN FAMILY MEMBER"/>
    <property type="match status" value="1"/>
</dbReference>
<dbReference type="Pfam" id="PF01103">
    <property type="entry name" value="Omp85"/>
    <property type="match status" value="1"/>
</dbReference>
<dbReference type="Pfam" id="PF07244">
    <property type="entry name" value="POTRA"/>
    <property type="match status" value="4"/>
</dbReference>
<dbReference type="PIRSF" id="PIRSF006076">
    <property type="entry name" value="OM_assembly_OMP85"/>
    <property type="match status" value="1"/>
</dbReference>
<dbReference type="PROSITE" id="PS51779">
    <property type="entry name" value="POTRA"/>
    <property type="match status" value="5"/>
</dbReference>
<proteinExistence type="inferred from homology"/>
<protein>
    <recommendedName>
        <fullName evidence="1">Outer membrane protein assembly factor BamA</fullName>
    </recommendedName>
</protein>
<organism>
    <name type="scientific">Escherichia coli O139:H28 (strain E24377A / ETEC)</name>
    <dbReference type="NCBI Taxonomy" id="331111"/>
    <lineage>
        <taxon>Bacteria</taxon>
        <taxon>Pseudomonadati</taxon>
        <taxon>Pseudomonadota</taxon>
        <taxon>Gammaproteobacteria</taxon>
        <taxon>Enterobacterales</taxon>
        <taxon>Enterobacteriaceae</taxon>
        <taxon>Escherichia</taxon>
    </lineage>
</organism>
<comment type="function">
    <text evidence="1">Part of the outer membrane protein assembly complex, which is involved in assembly and insertion of beta-barrel proteins into the outer membrane. Constitutes, with BamD, the core component of the assembly machinery.</text>
</comment>
<comment type="subunit">
    <text evidence="1">Part of the Bam complex, which is composed of the outer membrane protein BamA, and four lipoproteins BamB, BamC, BamD and BamE.</text>
</comment>
<comment type="subcellular location">
    <subcellularLocation>
        <location evidence="1">Cell outer membrane</location>
    </subcellularLocation>
</comment>
<comment type="similarity">
    <text evidence="1">Belongs to the BamA family.</text>
</comment>
<gene>
    <name evidence="1" type="primary">bamA</name>
    <name type="synonym">yaeT</name>
    <name type="ordered locus">EcE24377A_0181</name>
</gene>
<sequence>MAMKKLLIASLLFSSATVYGAEGFVVKDIHFEGLQRVAVGAALLSMPVRTGDTVNDEDISNTIRALFATGNFEDVRVLRDGDTLLVQVKERPTIASITFSGNKSVKDDMLKQNLEASGVRVGESLDRTTIADIEKGLEDFYYSVGKYSASVKAVVTPLPRNRVDLKLVFQEGVSAEIQQINIVGNHAFTTDELISHFQLRDEVPWWNVVGDRKYQKQKLAGDLETLRSYYLDRGYARFNIDSTQVSLTPDKKGIYVTVNITEGDQYKLSGVEVSGNLAGHSAEIEQLTKIEPGELYNGTKVTKMEDDIKKLLGRYGYAYPRVQSMPEINDADKTVKLRVNVDAGNRFYVRKIRFEGNDTSKDAVLRREMRQMEGAWLGSDLVDQGKERLNRLGFFETVDTDTQRVPGSPDQVDVVYKVKERNTGSFNFGIGYGTESGVSFQAGVQQDNWLGTGYAVGINGTKNDYQTYAELSVTNPYFTVDGVSLGGRLFYNDFQADDADLSDYTNKSYGTDVTLGFPINEYNSLRAGLGYVHNSLSNMQPQVAMWRYLYSMGEHPSTSDQDNSFKTDDFTFNYGWTYNKLDRGYFPTDGSRVNLTGKVTIPGSDNEYYKVTLDTATYVPIDDDHKWVVLGRTRWGYGDGLGGKEMPFYENFYAGGSSTVRGFQSNTIGPKAVYFPHQASNYDPDYDYECATQDGAKDLCKSDDAVGGNAMAVASLEFITPTPFISDKYANSVRTSFFWDMGTVWDTNWDSSQYSGYPDYSDPSNIRMSAGIALQWMSPLGPLVFSYAQPFKKYDGDKAEQFQFNIGKTW</sequence>
<name>BAMA_ECO24</name>
<accession>A7ZHR7</accession>
<feature type="signal peptide" evidence="1">
    <location>
        <begin position="1"/>
        <end position="20"/>
    </location>
</feature>
<feature type="chain" id="PRO_1000068523" description="Outer membrane protein assembly factor BamA">
    <location>
        <begin position="21"/>
        <end position="810"/>
    </location>
</feature>
<feature type="domain" description="POTRA 1" evidence="2">
    <location>
        <begin position="24"/>
        <end position="91"/>
    </location>
</feature>
<feature type="domain" description="POTRA 2" evidence="2">
    <location>
        <begin position="92"/>
        <end position="172"/>
    </location>
</feature>
<feature type="domain" description="POTRA 3" evidence="2">
    <location>
        <begin position="175"/>
        <end position="263"/>
    </location>
</feature>
<feature type="domain" description="POTRA 4" evidence="2">
    <location>
        <begin position="266"/>
        <end position="344"/>
    </location>
</feature>
<feature type="domain" description="POTRA 5" evidence="2">
    <location>
        <begin position="347"/>
        <end position="421"/>
    </location>
</feature>